<organism>
    <name type="scientific">Mus musculus</name>
    <name type="common">Mouse</name>
    <dbReference type="NCBI Taxonomy" id="10090"/>
    <lineage>
        <taxon>Eukaryota</taxon>
        <taxon>Metazoa</taxon>
        <taxon>Chordata</taxon>
        <taxon>Craniata</taxon>
        <taxon>Vertebrata</taxon>
        <taxon>Euteleostomi</taxon>
        <taxon>Mammalia</taxon>
        <taxon>Eutheria</taxon>
        <taxon>Euarchontoglires</taxon>
        <taxon>Glires</taxon>
        <taxon>Rodentia</taxon>
        <taxon>Myomorpha</taxon>
        <taxon>Muroidea</taxon>
        <taxon>Muridae</taxon>
        <taxon>Murinae</taxon>
        <taxon>Mus</taxon>
        <taxon>Mus</taxon>
    </lineage>
</organism>
<gene>
    <name type="primary">Atp1a3</name>
</gene>
<reference key="1">
    <citation type="journal article" date="2004" name="Genome Res.">
        <title>The status, quality, and expansion of the NIH full-length cDNA project: the Mammalian Gene Collection (MGC).</title>
        <authorList>
            <consortium name="The MGC Project Team"/>
        </authorList>
    </citation>
    <scope>NUCLEOTIDE SEQUENCE [LARGE SCALE MRNA]</scope>
    <source>
        <tissue>Eye</tissue>
    </source>
</reference>
<reference key="2">
    <citation type="submission" date="2007-04" db="UniProtKB">
        <authorList>
            <person name="Lubec G."/>
            <person name="Kang S.U."/>
        </authorList>
    </citation>
    <scope>PROTEIN SEQUENCE OF 21-27; 36-81; 153-163; 168-184; 203-254; 260-271; 350-367; 404-420; 425-434; 436-458; 466-492; 517-557; 587-595; 603-615; 620-648; 652-682; 689-764; 878-901; 931-940; 943-969 AND 1001-1009</scope>
    <source>
        <strain>C57BL/6J</strain>
        <tissue>Brain</tissue>
    </source>
</reference>
<reference key="3">
    <citation type="journal article" date="2005" name="Proteomics">
        <title>Quantitative analysis of both protein expression and serine / threonine post-translational modifications through stable isotope labeling with dithiothreitol.</title>
        <authorList>
            <person name="Vosseller K."/>
            <person name="Hansen K.C."/>
            <person name="Chalkley R.J."/>
            <person name="Trinidad J.C."/>
            <person name="Wells L."/>
            <person name="Hart G.W."/>
            <person name="Burlingame A.L."/>
        </authorList>
    </citation>
    <scope>PHOSPHORYLATION [LARGE SCALE ANALYSIS] AT SER-265</scope>
    <scope>IDENTIFICATION BY MASS SPECTROMETRY [LARGE SCALE ANALYSIS]</scope>
</reference>
<reference key="4">
    <citation type="journal article" date="2008" name="J. Proteome Res.">
        <title>Large-scale identification and evolution indexing of tyrosine phosphorylation sites from murine brain.</title>
        <authorList>
            <person name="Ballif B.A."/>
            <person name="Carey G.R."/>
            <person name="Sunyaev S.R."/>
            <person name="Gygi S.P."/>
        </authorList>
    </citation>
    <scope>PHOSPHORYLATION [LARGE SCALE ANALYSIS] AT TYR-548</scope>
    <scope>IDENTIFICATION BY MASS SPECTROMETRY [LARGE SCALE ANALYSIS]</scope>
    <source>
        <tissue>Brain</tissue>
    </source>
</reference>
<reference key="5">
    <citation type="journal article" date="2010" name="Cell">
        <title>A tissue-specific atlas of mouse protein phosphorylation and expression.</title>
        <authorList>
            <person name="Huttlin E.L."/>
            <person name="Jedrychowski M.P."/>
            <person name="Elias J.E."/>
            <person name="Goswami T."/>
            <person name="Rad R."/>
            <person name="Beausoleil S.A."/>
            <person name="Villen J."/>
            <person name="Haas W."/>
            <person name="Sowa M.E."/>
            <person name="Gygi S.P."/>
        </authorList>
    </citation>
    <scope>PHOSPHORYLATION [LARGE SCALE ANALYSIS] AT SER-56 AND SER-218</scope>
    <scope>IDENTIFICATION BY MASS SPECTROMETRY [LARGE SCALE ANALYSIS]</scope>
    <source>
        <tissue>Brain</tissue>
        <tissue>Brown adipose tissue</tissue>
        <tissue>Liver</tissue>
    </source>
</reference>
<feature type="chain" id="PRO_0000046299" description="Sodium/potassium-transporting ATPase subunit alpha-3">
    <location>
        <begin position="1"/>
        <end position="1013"/>
    </location>
</feature>
<feature type="topological domain" description="Cytoplasmic" evidence="3">
    <location>
        <begin position="1"/>
        <end position="77"/>
    </location>
</feature>
<feature type="transmembrane region" description="Helical" evidence="3">
    <location>
        <begin position="78"/>
        <end position="98"/>
    </location>
</feature>
<feature type="topological domain" description="Extracellular" evidence="3">
    <location>
        <begin position="99"/>
        <end position="121"/>
    </location>
</feature>
<feature type="transmembrane region" description="Helical" evidence="3">
    <location>
        <begin position="122"/>
        <end position="142"/>
    </location>
</feature>
<feature type="topological domain" description="Cytoplasmic" evidence="3">
    <location>
        <begin position="143"/>
        <end position="278"/>
    </location>
</feature>
<feature type="transmembrane region" description="Helical" evidence="3">
    <location>
        <begin position="279"/>
        <end position="298"/>
    </location>
</feature>
<feature type="topological domain" description="Extracellular" evidence="3">
    <location>
        <begin position="299"/>
        <end position="310"/>
    </location>
</feature>
<feature type="transmembrane region" description="Helical" evidence="3">
    <location>
        <begin position="311"/>
        <end position="328"/>
    </location>
</feature>
<feature type="topological domain" description="Cytoplasmic" evidence="3">
    <location>
        <begin position="329"/>
        <end position="762"/>
    </location>
</feature>
<feature type="transmembrane region" description="Helical" evidence="3">
    <location>
        <begin position="763"/>
        <end position="782"/>
    </location>
</feature>
<feature type="topological domain" description="Extracellular" evidence="3">
    <location>
        <begin position="783"/>
        <end position="792"/>
    </location>
</feature>
<feature type="transmembrane region" description="Helical" evidence="3">
    <location>
        <begin position="793"/>
        <end position="813"/>
    </location>
</feature>
<feature type="topological domain" description="Cytoplasmic" evidence="3">
    <location>
        <begin position="814"/>
        <end position="833"/>
    </location>
</feature>
<feature type="transmembrane region" description="Helical" evidence="3">
    <location>
        <begin position="834"/>
        <end position="856"/>
    </location>
</feature>
<feature type="topological domain" description="Extracellular" evidence="3">
    <location>
        <begin position="857"/>
        <end position="908"/>
    </location>
</feature>
<feature type="transmembrane region" description="Helical" evidence="3">
    <location>
        <begin position="909"/>
        <end position="928"/>
    </location>
</feature>
<feature type="topological domain" description="Cytoplasmic" evidence="3">
    <location>
        <begin position="929"/>
        <end position="941"/>
    </location>
</feature>
<feature type="transmembrane region" description="Helical" evidence="3">
    <location>
        <begin position="942"/>
        <end position="960"/>
    </location>
</feature>
<feature type="topological domain" description="Extracellular" evidence="3">
    <location>
        <begin position="961"/>
        <end position="975"/>
    </location>
</feature>
<feature type="transmembrane region" description="Helical" evidence="3">
    <location>
        <begin position="976"/>
        <end position="996"/>
    </location>
</feature>
<feature type="topological domain" description="Cytoplasmic" evidence="3">
    <location>
        <begin position="997"/>
        <end position="1013"/>
    </location>
</feature>
<feature type="region of interest" description="Disordered" evidence="4">
    <location>
        <begin position="1"/>
        <end position="24"/>
    </location>
</feature>
<feature type="region of interest" description="Interaction with phosphoinositide-3 kinase" evidence="1">
    <location>
        <begin position="72"/>
        <end position="74"/>
    </location>
</feature>
<feature type="compositionally biased region" description="Basic and acidic residues" evidence="4">
    <location>
        <begin position="1"/>
        <end position="10"/>
    </location>
</feature>
<feature type="active site" description="4-aspartylphosphate intermediate" evidence="1">
    <location>
        <position position="366"/>
    </location>
</feature>
<feature type="binding site" evidence="1">
    <location>
        <position position="707"/>
    </location>
    <ligand>
        <name>Mg(2+)</name>
        <dbReference type="ChEBI" id="CHEBI:18420"/>
    </ligand>
</feature>
<feature type="binding site" evidence="1">
    <location>
        <position position="711"/>
    </location>
    <ligand>
        <name>Mg(2+)</name>
        <dbReference type="ChEBI" id="CHEBI:18420"/>
    </ligand>
</feature>
<feature type="modified residue" description="Phosphoserine" evidence="2">
    <location>
        <position position="37"/>
    </location>
</feature>
<feature type="modified residue" description="Phosphoserine" evidence="8">
    <location>
        <position position="56"/>
    </location>
</feature>
<feature type="modified residue" description="Phosphoserine" evidence="8">
    <location>
        <position position="218"/>
    </location>
</feature>
<feature type="modified residue" description="Phosphoserine" evidence="6">
    <location>
        <position position="265"/>
    </location>
</feature>
<feature type="modified residue" description="Phosphoserine" evidence="2">
    <location>
        <position position="442"/>
    </location>
</feature>
<feature type="modified residue" description="Phosphotyrosine" evidence="7">
    <location>
        <position position="548"/>
    </location>
</feature>
<feature type="modified residue" description="Phosphoserine; by PKA" evidence="1">
    <location>
        <position position="933"/>
    </location>
</feature>
<proteinExistence type="evidence at protein level"/>
<keyword id="KW-0067">ATP-binding</keyword>
<keyword id="KW-1003">Cell membrane</keyword>
<keyword id="KW-0903">Direct protein sequencing</keyword>
<keyword id="KW-0406">Ion transport</keyword>
<keyword id="KW-0460">Magnesium</keyword>
<keyword id="KW-0472">Membrane</keyword>
<keyword id="KW-0479">Metal-binding</keyword>
<keyword id="KW-0547">Nucleotide-binding</keyword>
<keyword id="KW-0597">Phosphoprotein</keyword>
<keyword id="KW-0630">Potassium</keyword>
<keyword id="KW-0633">Potassium transport</keyword>
<keyword id="KW-1185">Reference proteome</keyword>
<keyword id="KW-0915">Sodium</keyword>
<keyword id="KW-0739">Sodium transport</keyword>
<keyword id="KW-0740">Sodium/potassium transport</keyword>
<keyword id="KW-1278">Translocase</keyword>
<keyword id="KW-0812">Transmembrane</keyword>
<keyword id="KW-1133">Transmembrane helix</keyword>
<keyword id="KW-0813">Transport</keyword>
<name>AT1A3_MOUSE</name>
<sequence>MGDKKDDKSSPKKSKAKERRDLDDLKKEVAMTEHKMSVEEVCRKYNTDCVQGLTHSKAQEILARDGPNALTPPPTTPEWVKFCRQLFGGFSILLWIGAILCFLAYGIQAGTEDDPSGDNLYLGIVLAAVVIITGCFSYYQEAKSSKIMESFKNMVPQQALVIREGEKMQVNAEEVVVGDLVEIKGGDRVPADLRIISAHGCKVDNSSLTGESEPQTRSPDCTHDNPLETRNITFFSTNCVEGTARGVVVATGDRTVMGRIATLASGLEVGKTPIAIEIEHFIQLITGVAVFLGVSFFILSLILGYTWLEAVIFLIGIIVANVPEGLLATVTVCLTLTAKRMARKNCLVKNLEAVETLGSTSTICSDKTGTLTQNRMTVAHMWFDNQIHEADTTEDQSGTSFDKSSHTWVALSHIAGLCNRAVFKGGQDNIPVLKRDVAGDASESALLKCIELSSGSVKLMRERNKKVAEIPFNSTNKYQLSIHETEDPNDNRYLLVMKGAPERILDRCATILLQGKEQPLDEEMKEAFQNAYLELGGLGERVLGFCHYYLPEEQFPKGFAFDCDDVNFTTDNLCFVGLMSMIDPPRAAVPDAVGKCRSAGIKVIMVTGDHPITAKAIAKGVGIISEGNETVEDIAARLNIPVSQVNPRDAKACVIHGTDLKDFTSEQIDEILQNHTEIVFARTSPQQKLIIVEGCQRQGAIVAVTGDGVNDSPALKKADIGVAMGIAGSDVSKQAADMILLDDNFASIVTGVEEGRLIFDNLKKSIAYTLTSNIPEITPFLLFIMANIPLPLGTITILCIDLGTDMVPAISLAYEAAESDIMKRQPRNPRTDKLVNERLISMAYGQIGMIQALGGFFSYFVILAENGFLPGNLVGIRLNWDDRTVNDLEDSYGQQWTYEQRKVVEFTCHTAFFVSIVVVQWADLIICKTRRNSVFQQGMKNKILIFGLFEETALAAFLSYCPGMDVALRMYPLKPSWWFCAFPYSFLIFVYDEIRKLILRRNPGGWVEKETYY</sequence>
<protein>
    <recommendedName>
        <fullName>Sodium/potassium-transporting ATPase subunit alpha-3</fullName>
        <shortName>Na(+)/K(+) ATPase alpha-3 subunit</shortName>
        <ecNumber>7.2.2.13</ecNumber>
    </recommendedName>
    <alternativeName>
        <fullName>Na(+)/K(+) ATPase alpha(III) subunit</fullName>
    </alternativeName>
    <alternativeName>
        <fullName>Sodium pump subunit alpha-3</fullName>
    </alternativeName>
</protein>
<evidence type="ECO:0000250" key="1"/>
<evidence type="ECO:0000250" key="2">
    <source>
        <dbReference type="UniProtKB" id="P06687"/>
    </source>
</evidence>
<evidence type="ECO:0000255" key="3"/>
<evidence type="ECO:0000256" key="4">
    <source>
        <dbReference type="SAM" id="MobiDB-lite"/>
    </source>
</evidence>
<evidence type="ECO:0000305" key="5"/>
<evidence type="ECO:0007744" key="6">
    <source>
    </source>
</evidence>
<evidence type="ECO:0007744" key="7">
    <source>
    </source>
</evidence>
<evidence type="ECO:0007744" key="8">
    <source>
    </source>
</evidence>
<accession>Q6PIC6</accession>
<dbReference type="EC" id="7.2.2.13"/>
<dbReference type="EMBL" id="BC034645">
    <property type="protein sequence ID" value="AAH34645.1"/>
    <property type="molecule type" value="mRNA"/>
</dbReference>
<dbReference type="EMBL" id="BC037206">
    <property type="protein sequence ID" value="AAH37206.1"/>
    <property type="molecule type" value="mRNA"/>
</dbReference>
<dbReference type="EMBL" id="BC042894">
    <property type="protein sequence ID" value="AAH42894.1"/>
    <property type="molecule type" value="mRNA"/>
</dbReference>
<dbReference type="CCDS" id="CCDS20969.2"/>
<dbReference type="RefSeq" id="NP_001277398.1">
    <property type="nucleotide sequence ID" value="NM_001290469.2"/>
</dbReference>
<dbReference type="SMR" id="Q6PIC6"/>
<dbReference type="BioGRID" id="231339">
    <property type="interactions" value="21"/>
</dbReference>
<dbReference type="FunCoup" id="Q6PIC6">
    <property type="interactions" value="1095"/>
</dbReference>
<dbReference type="IntAct" id="Q6PIC6">
    <property type="interactions" value="10"/>
</dbReference>
<dbReference type="MINT" id="Q6PIC6"/>
<dbReference type="STRING" id="10090.ENSMUSP00000079691"/>
<dbReference type="GlyConnect" id="2725">
    <property type="glycosylation" value="1 N-Linked glycan (1 site)"/>
</dbReference>
<dbReference type="GlyCosmos" id="Q6PIC6">
    <property type="glycosylation" value="1 site, 1 glycan"/>
</dbReference>
<dbReference type="GlyGen" id="Q6PIC6">
    <property type="glycosylation" value="8 sites, 6 N-linked glycans (5 sites), 1 O-linked glycan (3 sites)"/>
</dbReference>
<dbReference type="iPTMnet" id="Q6PIC6"/>
<dbReference type="PhosphoSitePlus" id="Q6PIC6"/>
<dbReference type="SwissPalm" id="Q6PIC6"/>
<dbReference type="jPOST" id="Q6PIC6"/>
<dbReference type="PaxDb" id="10090-ENSMUSP00000099922"/>
<dbReference type="PeptideAtlas" id="Q6PIC6"/>
<dbReference type="ProteomicsDB" id="277263"/>
<dbReference type="DNASU" id="232975"/>
<dbReference type="Ensembl" id="ENSMUST00000080882.11">
    <property type="protein sequence ID" value="ENSMUSP00000079691.7"/>
    <property type="gene ID" value="ENSMUSG00000040907.16"/>
</dbReference>
<dbReference type="GeneID" id="232975"/>
<dbReference type="KEGG" id="mmu:232975"/>
<dbReference type="UCSC" id="uc009frf.2">
    <property type="organism name" value="mouse"/>
</dbReference>
<dbReference type="AGR" id="MGI:88107"/>
<dbReference type="CTD" id="478"/>
<dbReference type="MGI" id="MGI:88107">
    <property type="gene designation" value="Atp1a3"/>
</dbReference>
<dbReference type="VEuPathDB" id="HostDB:ENSMUSG00000040907"/>
<dbReference type="eggNOG" id="KOG0203">
    <property type="taxonomic scope" value="Eukaryota"/>
</dbReference>
<dbReference type="GeneTree" id="ENSGT00940000160476"/>
<dbReference type="HOGENOM" id="CLU_002360_4_3_1"/>
<dbReference type="InParanoid" id="Q6PIC6"/>
<dbReference type="OMA" id="FGIDDYI"/>
<dbReference type="OrthoDB" id="3352408at2759"/>
<dbReference type="Reactome" id="R-MMU-5578775">
    <property type="pathway name" value="Ion homeostasis"/>
</dbReference>
<dbReference type="Reactome" id="R-MMU-936837">
    <property type="pathway name" value="Ion transport by P-type ATPases"/>
</dbReference>
<dbReference type="BioGRID-ORCS" id="232975">
    <property type="hits" value="3 hits in 63 CRISPR screens"/>
</dbReference>
<dbReference type="CD-CODE" id="CE726F99">
    <property type="entry name" value="Postsynaptic density"/>
</dbReference>
<dbReference type="ChiTaRS" id="Atp1a3">
    <property type="organism name" value="mouse"/>
</dbReference>
<dbReference type="PRO" id="PR:Q6PIC6"/>
<dbReference type="Proteomes" id="UP000000589">
    <property type="component" value="Chromosome 7"/>
</dbReference>
<dbReference type="RNAct" id="Q6PIC6">
    <property type="molecule type" value="protein"/>
</dbReference>
<dbReference type="Bgee" id="ENSMUSG00000040907">
    <property type="expression patterns" value="Expressed in primary visual cortex and 133 other cell types or tissues"/>
</dbReference>
<dbReference type="ExpressionAtlas" id="Q6PIC6">
    <property type="expression patterns" value="baseline and differential"/>
</dbReference>
<dbReference type="GO" id="GO:0009986">
    <property type="term" value="C:cell surface"/>
    <property type="evidence" value="ECO:0000314"/>
    <property type="project" value="MGI"/>
</dbReference>
<dbReference type="GO" id="GO:0005737">
    <property type="term" value="C:cytoplasm"/>
    <property type="evidence" value="ECO:0000314"/>
    <property type="project" value="MGI"/>
</dbReference>
<dbReference type="GO" id="GO:0005783">
    <property type="term" value="C:endoplasmic reticulum"/>
    <property type="evidence" value="ECO:0000250"/>
    <property type="project" value="UniProtKB"/>
</dbReference>
<dbReference type="GO" id="GO:0005794">
    <property type="term" value="C:Golgi apparatus"/>
    <property type="evidence" value="ECO:0000250"/>
    <property type="project" value="UniProtKB"/>
</dbReference>
<dbReference type="GO" id="GO:0043209">
    <property type="term" value="C:myelin sheath"/>
    <property type="evidence" value="ECO:0007005"/>
    <property type="project" value="UniProtKB"/>
</dbReference>
<dbReference type="GO" id="GO:0098984">
    <property type="term" value="C:neuron to neuron synapse"/>
    <property type="evidence" value="ECO:0000314"/>
    <property type="project" value="ARUK-UCL"/>
</dbReference>
<dbReference type="GO" id="GO:0005634">
    <property type="term" value="C:nucleus"/>
    <property type="evidence" value="ECO:0000314"/>
    <property type="project" value="MGI"/>
</dbReference>
<dbReference type="GO" id="GO:0001917">
    <property type="term" value="C:photoreceptor inner segment"/>
    <property type="evidence" value="ECO:0000314"/>
    <property type="project" value="ARUK-UCL"/>
</dbReference>
<dbReference type="GO" id="GO:0005886">
    <property type="term" value="C:plasma membrane"/>
    <property type="evidence" value="ECO:0000250"/>
    <property type="project" value="UniProtKB"/>
</dbReference>
<dbReference type="GO" id="GO:0032991">
    <property type="term" value="C:protein-containing complex"/>
    <property type="evidence" value="ECO:0000314"/>
    <property type="project" value="MGI"/>
</dbReference>
<dbReference type="GO" id="GO:0042383">
    <property type="term" value="C:sarcolemma"/>
    <property type="evidence" value="ECO:0000314"/>
    <property type="project" value="BHF-UCL"/>
</dbReference>
<dbReference type="GO" id="GO:0005890">
    <property type="term" value="C:sodium:potassium-exchanging ATPase complex"/>
    <property type="evidence" value="ECO:0000314"/>
    <property type="project" value="BHF-UCL"/>
</dbReference>
<dbReference type="GO" id="GO:0045202">
    <property type="term" value="C:synapse"/>
    <property type="evidence" value="ECO:0000250"/>
    <property type="project" value="UniProtKB"/>
</dbReference>
<dbReference type="GO" id="GO:0005524">
    <property type="term" value="F:ATP binding"/>
    <property type="evidence" value="ECO:0007669"/>
    <property type="project" value="UniProtKB-KW"/>
</dbReference>
<dbReference type="GO" id="GO:0016887">
    <property type="term" value="F:ATP hydrolysis activity"/>
    <property type="evidence" value="ECO:0007669"/>
    <property type="project" value="InterPro"/>
</dbReference>
<dbReference type="GO" id="GO:0043395">
    <property type="term" value="F:heparan sulfate proteoglycan binding"/>
    <property type="evidence" value="ECO:0000353"/>
    <property type="project" value="BHF-UCL"/>
</dbReference>
<dbReference type="GO" id="GO:0046872">
    <property type="term" value="F:metal ion binding"/>
    <property type="evidence" value="ECO:0007669"/>
    <property type="project" value="UniProtKB-KW"/>
</dbReference>
<dbReference type="GO" id="GO:0005391">
    <property type="term" value="F:P-type sodium:potassium-exchanging transporter activity"/>
    <property type="evidence" value="ECO:0000314"/>
    <property type="project" value="MGI"/>
</dbReference>
<dbReference type="GO" id="GO:0008344">
    <property type="term" value="P:adult locomotory behavior"/>
    <property type="evidence" value="ECO:0000315"/>
    <property type="project" value="MGI"/>
</dbReference>
<dbReference type="GO" id="GO:0008015">
    <property type="term" value="P:blood circulation"/>
    <property type="evidence" value="ECO:0000316"/>
    <property type="project" value="MGI"/>
</dbReference>
<dbReference type="GO" id="GO:0031547">
    <property type="term" value="P:brain-derived neurotrophic factor receptor signaling pathway"/>
    <property type="evidence" value="ECO:0000315"/>
    <property type="project" value="MGI"/>
</dbReference>
<dbReference type="GO" id="GO:0019722">
    <property type="term" value="P:calcium-mediated signaling"/>
    <property type="evidence" value="ECO:0000315"/>
    <property type="project" value="MGI"/>
</dbReference>
<dbReference type="GO" id="GO:0046942">
    <property type="term" value="P:carboxylic acid transport"/>
    <property type="evidence" value="ECO:0000315"/>
    <property type="project" value="MGI"/>
</dbReference>
<dbReference type="GO" id="GO:0060048">
    <property type="term" value="P:cardiac muscle contraction"/>
    <property type="evidence" value="ECO:0000314"/>
    <property type="project" value="BHF-UCL"/>
</dbReference>
<dbReference type="GO" id="GO:0021987">
    <property type="term" value="P:cerebral cortex development"/>
    <property type="evidence" value="ECO:0000315"/>
    <property type="project" value="MGI"/>
</dbReference>
<dbReference type="GO" id="GO:0007623">
    <property type="term" value="P:circadian rhythm"/>
    <property type="evidence" value="ECO:0000316"/>
    <property type="project" value="MGI"/>
</dbReference>
<dbReference type="GO" id="GO:0050890">
    <property type="term" value="P:cognition"/>
    <property type="evidence" value="ECO:0000315"/>
    <property type="project" value="MGI"/>
</dbReference>
<dbReference type="GO" id="GO:0008340">
    <property type="term" value="P:determination of adult lifespan"/>
    <property type="evidence" value="ECO:0000315"/>
    <property type="project" value="MGI"/>
</dbReference>
<dbReference type="GO" id="GO:0070371">
    <property type="term" value="P:ERK1 and ERK2 cascade"/>
    <property type="evidence" value="ECO:0000315"/>
    <property type="project" value="MGI"/>
</dbReference>
<dbReference type="GO" id="GO:0042596">
    <property type="term" value="P:fear response"/>
    <property type="evidence" value="ECO:0000314"/>
    <property type="project" value="MGI"/>
</dbReference>
<dbReference type="GO" id="GO:0007214">
    <property type="term" value="P:gamma-aminobutyric acid signaling pathway"/>
    <property type="evidence" value="ECO:0000315"/>
    <property type="project" value="MGI"/>
</dbReference>
<dbReference type="GO" id="GO:0046959">
    <property type="term" value="P:habituation"/>
    <property type="evidence" value="ECO:0000315"/>
    <property type="project" value="MGI"/>
</dbReference>
<dbReference type="GO" id="GO:0006883">
    <property type="term" value="P:intracellular sodium ion homeostasis"/>
    <property type="evidence" value="ECO:0000314"/>
    <property type="project" value="BHF-UCL"/>
</dbReference>
<dbReference type="GO" id="GO:0035235">
    <property type="term" value="P:ionotropic glutamate receptor signaling pathway"/>
    <property type="evidence" value="ECO:0000315"/>
    <property type="project" value="MGI"/>
</dbReference>
<dbReference type="GO" id="GO:0019852">
    <property type="term" value="P:L-ascorbic acid metabolic process"/>
    <property type="evidence" value="ECO:0000315"/>
    <property type="project" value="MGI"/>
</dbReference>
<dbReference type="GO" id="GO:0007612">
    <property type="term" value="P:learning"/>
    <property type="evidence" value="ECO:0000315"/>
    <property type="project" value="MGI"/>
</dbReference>
<dbReference type="GO" id="GO:0040011">
    <property type="term" value="P:locomotion"/>
    <property type="evidence" value="ECO:0000315"/>
    <property type="project" value="MGI"/>
</dbReference>
<dbReference type="GO" id="GO:0007626">
    <property type="term" value="P:locomotory behavior"/>
    <property type="evidence" value="ECO:0000315"/>
    <property type="project" value="MGI"/>
</dbReference>
<dbReference type="GO" id="GO:0051899">
    <property type="term" value="P:membrane depolarization"/>
    <property type="evidence" value="ECO:0000315"/>
    <property type="project" value="MGI"/>
</dbReference>
<dbReference type="GO" id="GO:0007613">
    <property type="term" value="P:memory"/>
    <property type="evidence" value="ECO:0000315"/>
    <property type="project" value="MGI"/>
</dbReference>
<dbReference type="GO" id="GO:0061744">
    <property type="term" value="P:motor behavior"/>
    <property type="evidence" value="ECO:0000315"/>
    <property type="project" value="MGI"/>
</dbReference>
<dbReference type="GO" id="GO:0035264">
    <property type="term" value="P:multicellular organism growth"/>
    <property type="evidence" value="ECO:0000314"/>
    <property type="project" value="MGI"/>
</dbReference>
<dbReference type="GO" id="GO:0022008">
    <property type="term" value="P:neurogenesis"/>
    <property type="evidence" value="ECO:0000314"/>
    <property type="project" value="MGI"/>
</dbReference>
<dbReference type="GO" id="GO:0050905">
    <property type="term" value="P:neuromuscular process"/>
    <property type="evidence" value="ECO:0000315"/>
    <property type="project" value="MGI"/>
</dbReference>
<dbReference type="GO" id="GO:0050885">
    <property type="term" value="P:neuromuscular process controlling balance"/>
    <property type="evidence" value="ECO:0000314"/>
    <property type="project" value="MGI"/>
</dbReference>
<dbReference type="GO" id="GO:0043491">
    <property type="term" value="P:phosphatidylinositol 3-kinase/protein kinase B signal transduction"/>
    <property type="evidence" value="ECO:0000315"/>
    <property type="project" value="MGI"/>
</dbReference>
<dbReference type="GO" id="GO:0046931">
    <property type="term" value="P:pore complex assembly"/>
    <property type="evidence" value="ECO:0000315"/>
    <property type="project" value="MGI"/>
</dbReference>
<dbReference type="GO" id="GO:0086036">
    <property type="term" value="P:regulation of cardiac muscle cell membrane potential"/>
    <property type="evidence" value="ECO:0000316"/>
    <property type="project" value="BHF-UCL"/>
</dbReference>
<dbReference type="GO" id="GO:0048172">
    <property type="term" value="P:regulation of short-term neuronal synaptic plasticity"/>
    <property type="evidence" value="ECO:0000315"/>
    <property type="project" value="MGI"/>
</dbReference>
<dbReference type="GO" id="GO:0014823">
    <property type="term" value="P:response to activity"/>
    <property type="evidence" value="ECO:0000315"/>
    <property type="project" value="MGI"/>
</dbReference>
<dbReference type="GO" id="GO:0051602">
    <property type="term" value="P:response to electrical stimulus"/>
    <property type="evidence" value="ECO:0000315"/>
    <property type="project" value="MGI"/>
</dbReference>
<dbReference type="GO" id="GO:0090648">
    <property type="term" value="P:response to environmental enrichment"/>
    <property type="evidence" value="ECO:0000315"/>
    <property type="project" value="MGI"/>
</dbReference>
<dbReference type="GO" id="GO:0009725">
    <property type="term" value="P:response to hormone"/>
    <property type="evidence" value="ECO:0000315"/>
    <property type="project" value="MGI"/>
</dbReference>
<dbReference type="GO" id="GO:0035902">
    <property type="term" value="P:response to immobilization stress"/>
    <property type="evidence" value="ECO:0000315"/>
    <property type="project" value="MGI"/>
</dbReference>
<dbReference type="GO" id="GO:0010226">
    <property type="term" value="P:response to lithium ion"/>
    <property type="evidence" value="ECO:0000315"/>
    <property type="project" value="MGI"/>
</dbReference>
<dbReference type="GO" id="GO:1904313">
    <property type="term" value="P:response to methamphetamine hydrochloride"/>
    <property type="evidence" value="ECO:0000315"/>
    <property type="project" value="MGI"/>
</dbReference>
<dbReference type="GO" id="GO:0071867">
    <property type="term" value="P:response to monoamine"/>
    <property type="evidence" value="ECO:0000315"/>
    <property type="project" value="MGI"/>
</dbReference>
<dbReference type="GO" id="GO:0035864">
    <property type="term" value="P:response to potassium ion"/>
    <property type="evidence" value="ECO:0000315"/>
    <property type="project" value="MGI"/>
</dbReference>
<dbReference type="GO" id="GO:0006950">
    <property type="term" value="P:response to stress"/>
    <property type="evidence" value="ECO:0000315"/>
    <property type="project" value="MGI"/>
</dbReference>
<dbReference type="GO" id="GO:0009266">
    <property type="term" value="P:response to temperature stimulus"/>
    <property type="evidence" value="ECO:0000315"/>
    <property type="project" value="MGI"/>
</dbReference>
<dbReference type="GO" id="GO:0009410">
    <property type="term" value="P:response to xenobiotic stimulus"/>
    <property type="evidence" value="ECO:0000315"/>
    <property type="project" value="MGI"/>
</dbReference>
<dbReference type="GO" id="GO:0030431">
    <property type="term" value="P:sleep"/>
    <property type="evidence" value="ECO:0000315"/>
    <property type="project" value="MGI"/>
</dbReference>
<dbReference type="GO" id="GO:0035176">
    <property type="term" value="P:social behavior"/>
    <property type="evidence" value="ECO:0000315"/>
    <property type="project" value="MGI"/>
</dbReference>
<dbReference type="GO" id="GO:0036376">
    <property type="term" value="P:sodium ion export across plasma membrane"/>
    <property type="evidence" value="ECO:0000314"/>
    <property type="project" value="BHF-UCL"/>
</dbReference>
<dbReference type="GO" id="GO:0021794">
    <property type="term" value="P:thalamus development"/>
    <property type="evidence" value="ECO:0000315"/>
    <property type="project" value="MGI"/>
</dbReference>
<dbReference type="GO" id="GO:0019226">
    <property type="term" value="P:transmission of nerve impulse"/>
    <property type="evidence" value="ECO:0000315"/>
    <property type="project" value="MGI"/>
</dbReference>
<dbReference type="GO" id="GO:0008542">
    <property type="term" value="P:visual learning"/>
    <property type="evidence" value="ECO:0000314"/>
    <property type="project" value="MGI"/>
</dbReference>
<dbReference type="GO" id="GO:0090659">
    <property type="term" value="P:walking behavior"/>
    <property type="evidence" value="ECO:0000315"/>
    <property type="project" value="MGI"/>
</dbReference>
<dbReference type="CDD" id="cd02608">
    <property type="entry name" value="P-type_ATPase_Na-K_like"/>
    <property type="match status" value="1"/>
</dbReference>
<dbReference type="FunFam" id="2.70.150.10:FF:000106">
    <property type="entry name" value="Sodium/potassium-transporting ATPase subunit alpha"/>
    <property type="match status" value="1"/>
</dbReference>
<dbReference type="FunFam" id="3.40.1110.10:FF:000001">
    <property type="entry name" value="Sodium/potassium-transporting ATPase subunit alpha"/>
    <property type="match status" value="1"/>
</dbReference>
<dbReference type="FunFam" id="3.40.50.1000:FF:000004">
    <property type="entry name" value="Sodium/potassium-transporting ATPase subunit alpha"/>
    <property type="match status" value="1"/>
</dbReference>
<dbReference type="FunFam" id="1.20.1110.10:FF:000095">
    <property type="entry name" value="Sodium/potassium-transporting ATPase subunit alpha-1"/>
    <property type="match status" value="2"/>
</dbReference>
<dbReference type="Gene3D" id="3.40.1110.10">
    <property type="entry name" value="Calcium-transporting ATPase, cytoplasmic domain N"/>
    <property type="match status" value="1"/>
</dbReference>
<dbReference type="Gene3D" id="2.70.150.10">
    <property type="entry name" value="Calcium-transporting ATPase, cytoplasmic transduction domain A"/>
    <property type="match status" value="1"/>
</dbReference>
<dbReference type="Gene3D" id="1.20.1110.10">
    <property type="entry name" value="Calcium-transporting ATPase, transmembrane domain"/>
    <property type="match status" value="1"/>
</dbReference>
<dbReference type="Gene3D" id="3.40.50.1000">
    <property type="entry name" value="HAD superfamily/HAD-like"/>
    <property type="match status" value="1"/>
</dbReference>
<dbReference type="InterPro" id="IPR006068">
    <property type="entry name" value="ATPase_P-typ_cation-transptr_C"/>
</dbReference>
<dbReference type="InterPro" id="IPR004014">
    <property type="entry name" value="ATPase_P-typ_cation-transptr_N"/>
</dbReference>
<dbReference type="InterPro" id="IPR023299">
    <property type="entry name" value="ATPase_P-typ_cyto_dom_N"/>
</dbReference>
<dbReference type="InterPro" id="IPR018303">
    <property type="entry name" value="ATPase_P-typ_P_site"/>
</dbReference>
<dbReference type="InterPro" id="IPR023298">
    <property type="entry name" value="ATPase_P-typ_TM_dom_sf"/>
</dbReference>
<dbReference type="InterPro" id="IPR008250">
    <property type="entry name" value="ATPase_P-typ_transduc_dom_A_sf"/>
</dbReference>
<dbReference type="InterPro" id="IPR050510">
    <property type="entry name" value="Cation_transp_ATPase_P-type"/>
</dbReference>
<dbReference type="InterPro" id="IPR036412">
    <property type="entry name" value="HAD-like_sf"/>
</dbReference>
<dbReference type="InterPro" id="IPR023214">
    <property type="entry name" value="HAD_sf"/>
</dbReference>
<dbReference type="InterPro" id="IPR005775">
    <property type="entry name" value="P-type_ATPase_IIC"/>
</dbReference>
<dbReference type="InterPro" id="IPR001757">
    <property type="entry name" value="P_typ_ATPase"/>
</dbReference>
<dbReference type="InterPro" id="IPR044492">
    <property type="entry name" value="P_typ_ATPase_HD_dom"/>
</dbReference>
<dbReference type="NCBIfam" id="TIGR01106">
    <property type="entry name" value="ATPase-IIC_X-K"/>
    <property type="match status" value="1"/>
</dbReference>
<dbReference type="NCBIfam" id="TIGR01494">
    <property type="entry name" value="ATPase_P-type"/>
    <property type="match status" value="2"/>
</dbReference>
<dbReference type="PANTHER" id="PTHR43294">
    <property type="entry name" value="SODIUM/POTASSIUM-TRANSPORTING ATPASE SUBUNIT ALPHA"/>
    <property type="match status" value="1"/>
</dbReference>
<dbReference type="PANTHER" id="PTHR43294:SF15">
    <property type="entry name" value="SODIUM_POTASSIUM-TRANSPORTING ATPASE SUBUNIT ALPHA-3"/>
    <property type="match status" value="1"/>
</dbReference>
<dbReference type="Pfam" id="PF13246">
    <property type="entry name" value="Cation_ATPase"/>
    <property type="match status" value="1"/>
</dbReference>
<dbReference type="Pfam" id="PF00689">
    <property type="entry name" value="Cation_ATPase_C"/>
    <property type="match status" value="1"/>
</dbReference>
<dbReference type="Pfam" id="PF00690">
    <property type="entry name" value="Cation_ATPase_N"/>
    <property type="match status" value="1"/>
</dbReference>
<dbReference type="Pfam" id="PF00122">
    <property type="entry name" value="E1-E2_ATPase"/>
    <property type="match status" value="1"/>
</dbReference>
<dbReference type="PRINTS" id="PR00119">
    <property type="entry name" value="CATATPASE"/>
</dbReference>
<dbReference type="PRINTS" id="PR00121">
    <property type="entry name" value="NAKATPASE"/>
</dbReference>
<dbReference type="SFLD" id="SFLDG00002">
    <property type="entry name" value="C1.7:_P-type_atpase_like"/>
    <property type="match status" value="1"/>
</dbReference>
<dbReference type="SFLD" id="SFLDF00027">
    <property type="entry name" value="p-type_atpase"/>
    <property type="match status" value="1"/>
</dbReference>
<dbReference type="SMART" id="SM00831">
    <property type="entry name" value="Cation_ATPase_N"/>
    <property type="match status" value="1"/>
</dbReference>
<dbReference type="SUPFAM" id="SSF81653">
    <property type="entry name" value="Calcium ATPase, transduction domain A"/>
    <property type="match status" value="1"/>
</dbReference>
<dbReference type="SUPFAM" id="SSF81665">
    <property type="entry name" value="Calcium ATPase, transmembrane domain M"/>
    <property type="match status" value="1"/>
</dbReference>
<dbReference type="SUPFAM" id="SSF56784">
    <property type="entry name" value="HAD-like"/>
    <property type="match status" value="1"/>
</dbReference>
<dbReference type="SUPFAM" id="SSF81660">
    <property type="entry name" value="Metal cation-transporting ATPase, ATP-binding domain N"/>
    <property type="match status" value="1"/>
</dbReference>
<dbReference type="PROSITE" id="PS00154">
    <property type="entry name" value="ATPASE_E1_E2"/>
    <property type="match status" value="1"/>
</dbReference>
<comment type="function">
    <text evidence="1">This is the catalytic component of the active enzyme, which catalyzes the hydrolysis of ATP coupled with the exchange of sodium and potassium ions across the plasma membrane. This action creates the electrochemical gradient of sodium and potassium ions, providing the energy for active transport of various nutrients (By similarity).</text>
</comment>
<comment type="catalytic activity">
    <reaction>
        <text>K(+)(out) + Na(+)(in) + ATP + H2O = K(+)(in) + Na(+)(out) + ADP + phosphate + H(+)</text>
        <dbReference type="Rhea" id="RHEA:18353"/>
        <dbReference type="ChEBI" id="CHEBI:15377"/>
        <dbReference type="ChEBI" id="CHEBI:15378"/>
        <dbReference type="ChEBI" id="CHEBI:29101"/>
        <dbReference type="ChEBI" id="CHEBI:29103"/>
        <dbReference type="ChEBI" id="CHEBI:30616"/>
        <dbReference type="ChEBI" id="CHEBI:43474"/>
        <dbReference type="ChEBI" id="CHEBI:456216"/>
        <dbReference type="EC" id="7.2.2.13"/>
    </reaction>
</comment>
<comment type="subunit">
    <text evidence="2">The sodium/potassium-transporting ATPase is composed of a catalytic alpha subunit, an auxiliary non-catalytic beta subunit and an additional regulatory subunit. Interacts with regulatory subunit FXYD1.</text>
</comment>
<comment type="subcellular location">
    <subcellularLocation>
        <location evidence="1">Cell membrane</location>
        <topology evidence="1">Multi-pass membrane protein</topology>
    </subcellularLocation>
</comment>
<comment type="similarity">
    <text evidence="5">Belongs to the cation transport ATPase (P-type) (TC 3.A.3) family. Type IIC subfamily.</text>
</comment>